<protein>
    <recommendedName>
        <fullName evidence="1">Pyrokinin-5</fullName>
    </recommendedName>
    <alternativeName>
        <fullName evidence="4">BlaGi-Capa-PK</fullName>
    </alternativeName>
    <alternativeName>
        <fullName evidence="1">FXPRL-amide</fullName>
    </alternativeName>
</protein>
<comment type="function">
    <text evidence="1">Myoactive.</text>
</comment>
<comment type="subcellular location">
    <subcellularLocation>
        <location evidence="5">Secreted</location>
    </subcellularLocation>
</comment>
<comment type="similarity">
    <text evidence="2">Belongs to the pyrokinin family.</text>
</comment>
<keyword id="KW-0027">Amidation</keyword>
<keyword id="KW-0903">Direct protein sequencing</keyword>
<keyword id="KW-0527">Neuropeptide</keyword>
<keyword id="KW-0964">Secreted</keyword>
<name>PPK5_BLAGI</name>
<feature type="peptide" id="PRO_0000378680" description="Pyrokinin-5" evidence="3">
    <location>
        <begin position="1"/>
        <end position="17"/>
    </location>
</feature>
<feature type="modified residue" description="Leucine amide" evidence="3">
    <location>
        <position position="17"/>
    </location>
</feature>
<organism>
    <name type="scientific">Blaberus giganteus</name>
    <name type="common">Giant cockroach</name>
    <dbReference type="NCBI Taxonomy" id="36943"/>
    <lineage>
        <taxon>Eukaryota</taxon>
        <taxon>Metazoa</taxon>
        <taxon>Ecdysozoa</taxon>
        <taxon>Arthropoda</taxon>
        <taxon>Hexapoda</taxon>
        <taxon>Insecta</taxon>
        <taxon>Pterygota</taxon>
        <taxon>Neoptera</taxon>
        <taxon>Polyneoptera</taxon>
        <taxon>Dictyoptera</taxon>
        <taxon>Blattodea</taxon>
        <taxon>Blaberoidea</taxon>
        <taxon>Blaberidae</taxon>
        <taxon>Blaberinae</taxon>
        <taxon>Blaberus</taxon>
    </lineage>
</organism>
<sequence length="17" mass="1837">AGESSNEAKGMWFGPRL</sequence>
<dbReference type="GO" id="GO:0005576">
    <property type="term" value="C:extracellular region"/>
    <property type="evidence" value="ECO:0007669"/>
    <property type="project" value="UniProtKB-SubCell"/>
</dbReference>
<dbReference type="GO" id="GO:0005184">
    <property type="term" value="F:neuropeptide hormone activity"/>
    <property type="evidence" value="ECO:0007669"/>
    <property type="project" value="InterPro"/>
</dbReference>
<dbReference type="GO" id="GO:0007218">
    <property type="term" value="P:neuropeptide signaling pathway"/>
    <property type="evidence" value="ECO:0007669"/>
    <property type="project" value="UniProtKB-KW"/>
</dbReference>
<dbReference type="InterPro" id="IPR001484">
    <property type="entry name" value="Pyrokinin_CS"/>
</dbReference>
<dbReference type="PROSITE" id="PS00539">
    <property type="entry name" value="PYROKININ"/>
    <property type="match status" value="1"/>
</dbReference>
<reference evidence="5" key="1">
    <citation type="journal article" date="2009" name="BMC Evol. Biol.">
        <title>A proteomic approach for studying insect phylogeny: CAPA peptides of ancient insect taxa (Dictyoptera, Blattoptera) as a test case.</title>
        <authorList>
            <person name="Roth S."/>
            <person name="Fromm B."/>
            <person name="Gaede G."/>
            <person name="Predel R."/>
        </authorList>
    </citation>
    <scope>PROTEIN SEQUENCE</scope>
    <scope>AMIDATION AT LEU-17</scope>
    <source>
        <tissue evidence="3">Abdominal perisympathetic organs</tissue>
    </source>
</reference>
<proteinExistence type="evidence at protein level"/>
<evidence type="ECO:0000250" key="1">
    <source>
        <dbReference type="UniProtKB" id="P82617"/>
    </source>
</evidence>
<evidence type="ECO:0000255" key="2"/>
<evidence type="ECO:0000269" key="3">
    <source>
    </source>
</evidence>
<evidence type="ECO:0000303" key="4">
    <source>
    </source>
</evidence>
<evidence type="ECO:0000305" key="5"/>
<accession>P85556</accession>